<feature type="chain" id="PRO_1000054750" description="Small ribosomal subunit protein uS15">
    <location>
        <begin position="1"/>
        <end position="89"/>
    </location>
</feature>
<sequence length="89" mass="10560">MALTQERKNEIIAQFRTHETDTGSPEVQIAVLTEQINTLNEHLRTHKKDHHSRRGLLKMVGKRRNLLTYLRNSDITRYRELITKLGLRR</sequence>
<evidence type="ECO:0000255" key="1">
    <source>
        <dbReference type="HAMAP-Rule" id="MF_01343"/>
    </source>
</evidence>
<evidence type="ECO:0000305" key="2"/>
<keyword id="KW-0687">Ribonucleoprotein</keyword>
<keyword id="KW-0689">Ribosomal protein</keyword>
<keyword id="KW-0694">RNA-binding</keyword>
<keyword id="KW-0699">rRNA-binding</keyword>
<comment type="function">
    <text evidence="1">One of the primary rRNA binding proteins, it binds directly to 16S rRNA where it helps nucleate assembly of the platform of the 30S subunit by binding and bridging several RNA helices of the 16S rRNA.</text>
</comment>
<comment type="function">
    <text evidence="1">Forms an intersubunit bridge (bridge B4) with the 23S rRNA of the 50S subunit in the ribosome.</text>
</comment>
<comment type="subunit">
    <text evidence="1">Part of the 30S ribosomal subunit. Forms a bridge to the 50S subunit in the 70S ribosome, contacting the 23S rRNA.</text>
</comment>
<comment type="similarity">
    <text evidence="1">Belongs to the universal ribosomal protein uS15 family.</text>
</comment>
<gene>
    <name evidence="1" type="primary">rpsO</name>
    <name type="ordered locus">BALH_3436</name>
</gene>
<protein>
    <recommendedName>
        <fullName evidence="1">Small ribosomal subunit protein uS15</fullName>
    </recommendedName>
    <alternativeName>
        <fullName evidence="2">30S ribosomal protein S15</fullName>
    </alternativeName>
</protein>
<accession>A0RHH9</accession>
<dbReference type="EMBL" id="CP000485">
    <property type="protein sequence ID" value="ABK86672.1"/>
    <property type="molecule type" value="Genomic_DNA"/>
</dbReference>
<dbReference type="RefSeq" id="WP_001229392.1">
    <property type="nucleotide sequence ID" value="NC_008600.1"/>
</dbReference>
<dbReference type="SMR" id="A0RHH9"/>
<dbReference type="GeneID" id="93007304"/>
<dbReference type="KEGG" id="btl:BALH_3436"/>
<dbReference type="HOGENOM" id="CLU_148518_0_0_9"/>
<dbReference type="GO" id="GO:0022627">
    <property type="term" value="C:cytosolic small ribosomal subunit"/>
    <property type="evidence" value="ECO:0007669"/>
    <property type="project" value="TreeGrafter"/>
</dbReference>
<dbReference type="GO" id="GO:0019843">
    <property type="term" value="F:rRNA binding"/>
    <property type="evidence" value="ECO:0007669"/>
    <property type="project" value="UniProtKB-UniRule"/>
</dbReference>
<dbReference type="GO" id="GO:0003735">
    <property type="term" value="F:structural constituent of ribosome"/>
    <property type="evidence" value="ECO:0007669"/>
    <property type="project" value="InterPro"/>
</dbReference>
<dbReference type="GO" id="GO:0006412">
    <property type="term" value="P:translation"/>
    <property type="evidence" value="ECO:0007669"/>
    <property type="project" value="UniProtKB-UniRule"/>
</dbReference>
<dbReference type="CDD" id="cd00353">
    <property type="entry name" value="Ribosomal_S15p_S13e"/>
    <property type="match status" value="1"/>
</dbReference>
<dbReference type="FunFam" id="1.10.287.10:FF:000002">
    <property type="entry name" value="30S ribosomal protein S15"/>
    <property type="match status" value="1"/>
</dbReference>
<dbReference type="Gene3D" id="6.10.250.3130">
    <property type="match status" value="1"/>
</dbReference>
<dbReference type="Gene3D" id="1.10.287.10">
    <property type="entry name" value="S15/NS1, RNA-binding"/>
    <property type="match status" value="1"/>
</dbReference>
<dbReference type="HAMAP" id="MF_01343_B">
    <property type="entry name" value="Ribosomal_uS15_B"/>
    <property type="match status" value="1"/>
</dbReference>
<dbReference type="InterPro" id="IPR000589">
    <property type="entry name" value="Ribosomal_uS15"/>
</dbReference>
<dbReference type="InterPro" id="IPR005290">
    <property type="entry name" value="Ribosomal_uS15_bac-type"/>
</dbReference>
<dbReference type="InterPro" id="IPR009068">
    <property type="entry name" value="uS15_NS1_RNA-bd_sf"/>
</dbReference>
<dbReference type="NCBIfam" id="TIGR00952">
    <property type="entry name" value="S15_bact"/>
    <property type="match status" value="1"/>
</dbReference>
<dbReference type="PANTHER" id="PTHR23321">
    <property type="entry name" value="RIBOSOMAL PROTEIN S15, BACTERIAL AND ORGANELLAR"/>
    <property type="match status" value="1"/>
</dbReference>
<dbReference type="PANTHER" id="PTHR23321:SF26">
    <property type="entry name" value="SMALL RIBOSOMAL SUBUNIT PROTEIN US15M"/>
    <property type="match status" value="1"/>
</dbReference>
<dbReference type="Pfam" id="PF00312">
    <property type="entry name" value="Ribosomal_S15"/>
    <property type="match status" value="1"/>
</dbReference>
<dbReference type="SMART" id="SM01387">
    <property type="entry name" value="Ribosomal_S15"/>
    <property type="match status" value="1"/>
</dbReference>
<dbReference type="SUPFAM" id="SSF47060">
    <property type="entry name" value="S15/NS1 RNA-binding domain"/>
    <property type="match status" value="1"/>
</dbReference>
<dbReference type="PROSITE" id="PS00362">
    <property type="entry name" value="RIBOSOMAL_S15"/>
    <property type="match status" value="1"/>
</dbReference>
<proteinExistence type="inferred from homology"/>
<organism>
    <name type="scientific">Bacillus thuringiensis (strain Al Hakam)</name>
    <dbReference type="NCBI Taxonomy" id="412694"/>
    <lineage>
        <taxon>Bacteria</taxon>
        <taxon>Bacillati</taxon>
        <taxon>Bacillota</taxon>
        <taxon>Bacilli</taxon>
        <taxon>Bacillales</taxon>
        <taxon>Bacillaceae</taxon>
        <taxon>Bacillus</taxon>
        <taxon>Bacillus cereus group</taxon>
    </lineage>
</organism>
<name>RS15_BACAH</name>
<reference key="1">
    <citation type="journal article" date="2007" name="J. Bacteriol.">
        <title>The complete genome sequence of Bacillus thuringiensis Al Hakam.</title>
        <authorList>
            <person name="Challacombe J.F."/>
            <person name="Altherr M.R."/>
            <person name="Xie G."/>
            <person name="Bhotika S.S."/>
            <person name="Brown N."/>
            <person name="Bruce D."/>
            <person name="Campbell C.S."/>
            <person name="Campbell M.L."/>
            <person name="Chen J."/>
            <person name="Chertkov O."/>
            <person name="Cleland C."/>
            <person name="Dimitrijevic M."/>
            <person name="Doggett N.A."/>
            <person name="Fawcett J.J."/>
            <person name="Glavina T."/>
            <person name="Goodwin L.A."/>
            <person name="Green L.D."/>
            <person name="Han C.S."/>
            <person name="Hill K.K."/>
            <person name="Hitchcock P."/>
            <person name="Jackson P.J."/>
            <person name="Keim P."/>
            <person name="Kewalramani A.R."/>
            <person name="Longmire J."/>
            <person name="Lucas S."/>
            <person name="Malfatti S."/>
            <person name="Martinez D."/>
            <person name="McMurry K."/>
            <person name="Meincke L.J."/>
            <person name="Misra M."/>
            <person name="Moseman B.L."/>
            <person name="Mundt M."/>
            <person name="Munk A.C."/>
            <person name="Okinaka R.T."/>
            <person name="Parson-Quintana B."/>
            <person name="Reilly L.P."/>
            <person name="Richardson P."/>
            <person name="Robinson D.L."/>
            <person name="Saunders E."/>
            <person name="Tapia R."/>
            <person name="Tesmer J.G."/>
            <person name="Thayer N."/>
            <person name="Thompson L.S."/>
            <person name="Tice H."/>
            <person name="Ticknor L.O."/>
            <person name="Wills P.L."/>
            <person name="Gilna P."/>
            <person name="Brettin T.S."/>
        </authorList>
    </citation>
    <scope>NUCLEOTIDE SEQUENCE [LARGE SCALE GENOMIC DNA]</scope>
    <source>
        <strain>Al Hakam</strain>
    </source>
</reference>